<accession>Q6F442</accession>
<comment type="subcellular location">
    <subcellularLocation>
        <location evidence="1">Cytoplasm</location>
    </subcellularLocation>
</comment>
<comment type="similarity">
    <text evidence="3">Belongs to the eukaryotic ribosomal protein eL18 family.</text>
</comment>
<gene>
    <name type="primary">RpL18</name>
</gene>
<keyword id="KW-0963">Cytoplasm</keyword>
<keyword id="KW-0687">Ribonucleoprotein</keyword>
<keyword id="KW-0689">Ribosomal protein</keyword>
<evidence type="ECO:0000250" key="1"/>
<evidence type="ECO:0000256" key="2">
    <source>
        <dbReference type="SAM" id="MobiDB-lite"/>
    </source>
</evidence>
<evidence type="ECO:0000305" key="3"/>
<protein>
    <recommendedName>
        <fullName evidence="3">Large ribosomal subunit protein eL18</fullName>
    </recommendedName>
    <alternativeName>
        <fullName>60S ribosomal protein L18</fullName>
    </alternativeName>
</protein>
<sequence length="183" mass="20927">MGIDINHKHDRKVRRTEVKSQDVYLRLLVKLYRYLARRTNAKFNQIVLRRLFMSRINRPPLSLSRLARHMKKPTREGLIAVVVGTITNDTRLYKVPKMTVAALHVTEKARARILDAGGEILTFDQLALRAPTGRKTVLIQGQRNAREAVRHFGPAPGAPRSHTKPYVRSKGHEQAKPSRRSNV</sequence>
<reference key="1">
    <citation type="submission" date="2004-07" db="EMBL/GenBank/DDBJ databases">
        <title>Construction and EST analysis of full-length cDNA libraries from immunized diamond back moth, Plutella xylostella.</title>
        <authorList>
            <person name="Eum J.H."/>
            <person name="Yoe S.M."/>
            <person name="Seo Y.R."/>
            <person name="Kang S.W."/>
            <person name="Han S.S."/>
        </authorList>
    </citation>
    <scope>NUCLEOTIDE SEQUENCE [LARGE SCALE MRNA]</scope>
</reference>
<organism>
    <name type="scientific">Plutella xylostella</name>
    <name type="common">Diamondback moth</name>
    <name type="synonym">Plutella maculipennis</name>
    <dbReference type="NCBI Taxonomy" id="51655"/>
    <lineage>
        <taxon>Eukaryota</taxon>
        <taxon>Metazoa</taxon>
        <taxon>Ecdysozoa</taxon>
        <taxon>Arthropoda</taxon>
        <taxon>Hexapoda</taxon>
        <taxon>Insecta</taxon>
        <taxon>Pterygota</taxon>
        <taxon>Neoptera</taxon>
        <taxon>Endopterygota</taxon>
        <taxon>Lepidoptera</taxon>
        <taxon>Glossata</taxon>
        <taxon>Ditrysia</taxon>
        <taxon>Yponomeutoidea</taxon>
        <taxon>Plutellidae</taxon>
        <taxon>Plutella</taxon>
    </lineage>
</organism>
<proteinExistence type="evidence at transcript level"/>
<name>RL18_PLUXY</name>
<feature type="chain" id="PRO_0000291632" description="Large ribosomal subunit protein eL18">
    <location>
        <begin position="1"/>
        <end position="183"/>
    </location>
</feature>
<feature type="region of interest" description="Disordered" evidence="2">
    <location>
        <begin position="151"/>
        <end position="183"/>
    </location>
</feature>
<dbReference type="EMBL" id="AB180448">
    <property type="protein sequence ID" value="BAD26692.1"/>
    <property type="molecule type" value="mRNA"/>
</dbReference>
<dbReference type="SMR" id="Q6F442"/>
<dbReference type="GeneID" id="105392651"/>
<dbReference type="KEGG" id="pxy:105392651"/>
<dbReference type="CTD" id="6141"/>
<dbReference type="OrthoDB" id="6353017at2759"/>
<dbReference type="GO" id="GO:0022625">
    <property type="term" value="C:cytosolic large ribosomal subunit"/>
    <property type="evidence" value="ECO:0007669"/>
    <property type="project" value="TreeGrafter"/>
</dbReference>
<dbReference type="GO" id="GO:0003723">
    <property type="term" value="F:RNA binding"/>
    <property type="evidence" value="ECO:0007669"/>
    <property type="project" value="TreeGrafter"/>
</dbReference>
<dbReference type="GO" id="GO:0003735">
    <property type="term" value="F:structural constituent of ribosome"/>
    <property type="evidence" value="ECO:0007669"/>
    <property type="project" value="InterPro"/>
</dbReference>
<dbReference type="GO" id="GO:0006412">
    <property type="term" value="P:translation"/>
    <property type="evidence" value="ECO:0007669"/>
    <property type="project" value="InterPro"/>
</dbReference>
<dbReference type="FunFam" id="3.100.10.10:FF:000001">
    <property type="entry name" value="60S ribosomal protein L18"/>
    <property type="match status" value="1"/>
</dbReference>
<dbReference type="Gene3D" id="3.100.10.10">
    <property type="match status" value="1"/>
</dbReference>
<dbReference type="InterPro" id="IPR000039">
    <property type="entry name" value="Ribosomal_eL18"/>
</dbReference>
<dbReference type="InterPro" id="IPR021132">
    <property type="entry name" value="Ribosomal_eL18/eL18-A/B/_CS"/>
</dbReference>
<dbReference type="InterPro" id="IPR021131">
    <property type="entry name" value="Ribosomal_uL15/eL18"/>
</dbReference>
<dbReference type="InterPro" id="IPR036227">
    <property type="entry name" value="Ribosomal_uL15/eL18_sf"/>
</dbReference>
<dbReference type="PANTHER" id="PTHR10934">
    <property type="entry name" value="60S RIBOSOMAL PROTEIN L18"/>
    <property type="match status" value="1"/>
</dbReference>
<dbReference type="PANTHER" id="PTHR10934:SF2">
    <property type="entry name" value="LARGE RIBOSOMAL SUBUNIT PROTEIN EL18"/>
    <property type="match status" value="1"/>
</dbReference>
<dbReference type="Pfam" id="PF17135">
    <property type="entry name" value="Ribosomal_L18"/>
    <property type="match status" value="1"/>
</dbReference>
<dbReference type="SUPFAM" id="SSF52080">
    <property type="entry name" value="Ribosomal proteins L15p and L18e"/>
    <property type="match status" value="1"/>
</dbReference>
<dbReference type="PROSITE" id="PS01106">
    <property type="entry name" value="RIBOSOMAL_L18E"/>
    <property type="match status" value="1"/>
</dbReference>